<accession>Q2FW08</accession>
<organism>
    <name type="scientific">Staphylococcus aureus (strain NCTC 8325 / PS 47)</name>
    <dbReference type="NCBI Taxonomy" id="93061"/>
    <lineage>
        <taxon>Bacteria</taxon>
        <taxon>Bacillati</taxon>
        <taxon>Bacillota</taxon>
        <taxon>Bacilli</taxon>
        <taxon>Bacillales</taxon>
        <taxon>Staphylococcaceae</taxon>
        <taxon>Staphylococcus</taxon>
    </lineage>
</organism>
<reference key="1">
    <citation type="book" date="2006" name="Gram positive pathogens, 2nd edition">
        <title>The Staphylococcus aureus NCTC 8325 genome.</title>
        <editorList>
            <person name="Fischetti V."/>
            <person name="Novick R."/>
            <person name="Ferretti J."/>
            <person name="Portnoy D."/>
            <person name="Rood J."/>
        </editorList>
        <authorList>
            <person name="Gillaspy A.F."/>
            <person name="Worrell V."/>
            <person name="Orvis J."/>
            <person name="Roe B.A."/>
            <person name="Dyer D.W."/>
            <person name="Iandolo J.J."/>
        </authorList>
    </citation>
    <scope>NUCLEOTIDE SEQUENCE [LARGE SCALE GENOMIC DNA]</scope>
    <source>
        <strain>NCTC 8325 / PS 47</strain>
    </source>
</reference>
<dbReference type="EMBL" id="CP000253">
    <property type="protein sequence ID" value="ABD31528.1"/>
    <property type="molecule type" value="Genomic_DNA"/>
</dbReference>
<dbReference type="RefSeq" id="WP_000388082.1">
    <property type="nucleotide sequence ID" value="NZ_LS483365.1"/>
</dbReference>
<dbReference type="RefSeq" id="YP_500977.1">
    <property type="nucleotide sequence ID" value="NC_007795.1"/>
</dbReference>
<dbReference type="PDB" id="4WCE">
    <property type="method" value="X-ray"/>
    <property type="resolution" value="3.53 A"/>
    <property type="chains" value="Q=1-91"/>
</dbReference>
<dbReference type="PDB" id="4WF9">
    <property type="method" value="X-ray"/>
    <property type="resolution" value="3.43 A"/>
    <property type="chains" value="Q=1-91"/>
</dbReference>
<dbReference type="PDB" id="4WFA">
    <property type="method" value="X-ray"/>
    <property type="resolution" value="3.39 A"/>
    <property type="chains" value="Q=1-91"/>
</dbReference>
<dbReference type="PDB" id="4WFB">
    <property type="method" value="X-ray"/>
    <property type="resolution" value="3.43 A"/>
    <property type="chains" value="Q=1-91"/>
</dbReference>
<dbReference type="PDB" id="5HKV">
    <property type="method" value="X-ray"/>
    <property type="resolution" value="3.66 A"/>
    <property type="chains" value="Q=1-91"/>
</dbReference>
<dbReference type="PDB" id="5HL7">
    <property type="method" value="X-ray"/>
    <property type="resolution" value="3.55 A"/>
    <property type="chains" value="Q=1-91"/>
</dbReference>
<dbReference type="PDB" id="5LI0">
    <property type="method" value="EM"/>
    <property type="resolution" value="3.80 A"/>
    <property type="chains" value="W=2-90"/>
</dbReference>
<dbReference type="PDB" id="5ND8">
    <property type="method" value="EM"/>
    <property type="resolution" value="3.70 A"/>
    <property type="chains" value="W=1-91"/>
</dbReference>
<dbReference type="PDB" id="5ND9">
    <property type="method" value="EM"/>
    <property type="resolution" value="3.70 A"/>
    <property type="chains" value="W=1-91"/>
</dbReference>
<dbReference type="PDB" id="5NRG">
    <property type="method" value="X-ray"/>
    <property type="resolution" value="3.44 A"/>
    <property type="chains" value="Q=1-91"/>
</dbReference>
<dbReference type="PDB" id="5TCU">
    <property type="method" value="EM"/>
    <property type="resolution" value="3.90 A"/>
    <property type="chains" value="L6=2-90"/>
</dbReference>
<dbReference type="PDB" id="6DDD">
    <property type="method" value="EM"/>
    <property type="resolution" value="3.10 A"/>
    <property type="chains" value="F=1-91"/>
</dbReference>
<dbReference type="PDB" id="6DDG">
    <property type="method" value="EM"/>
    <property type="resolution" value="3.10 A"/>
    <property type="chains" value="F=1-91"/>
</dbReference>
<dbReference type="PDB" id="6HMA">
    <property type="method" value="EM"/>
    <property type="resolution" value="2.65 A"/>
    <property type="chains" value="R=2-90"/>
</dbReference>
<dbReference type="PDB" id="6SJ6">
    <property type="method" value="EM"/>
    <property type="resolution" value="3.23 A"/>
    <property type="chains" value="W=1-91"/>
</dbReference>
<dbReference type="PDB" id="6WQN">
    <property type="method" value="EM"/>
    <property type="resolution" value="2.90 A"/>
    <property type="chains" value="F=1-91"/>
</dbReference>
<dbReference type="PDB" id="6WQQ">
    <property type="method" value="EM"/>
    <property type="resolution" value="3.10 A"/>
    <property type="chains" value="F=1-91"/>
</dbReference>
<dbReference type="PDB" id="6WRS">
    <property type="method" value="EM"/>
    <property type="resolution" value="3.20 A"/>
    <property type="chains" value="F=1-91"/>
</dbReference>
<dbReference type="PDB" id="6WRU">
    <property type="method" value="EM"/>
    <property type="resolution" value="3.10 A"/>
    <property type="chains" value="F=1-91"/>
</dbReference>
<dbReference type="PDB" id="6YEF">
    <property type="method" value="EM"/>
    <property type="resolution" value="3.20 A"/>
    <property type="chains" value="W=1-91"/>
</dbReference>
<dbReference type="PDB" id="7ASM">
    <property type="method" value="EM"/>
    <property type="resolution" value="2.48 A"/>
    <property type="chains" value="R=2-90"/>
</dbReference>
<dbReference type="PDB" id="7ASN">
    <property type="method" value="EM"/>
    <property type="resolution" value="2.73 A"/>
    <property type="chains" value="R=2-90"/>
</dbReference>
<dbReference type="PDB" id="7NHL">
    <property type="method" value="EM"/>
    <property type="resolution" value="3.10 A"/>
    <property type="chains" value="W=1-91"/>
</dbReference>
<dbReference type="PDB" id="7NHM">
    <property type="method" value="EM"/>
    <property type="resolution" value="3.10 A"/>
    <property type="chains" value="W=1-91"/>
</dbReference>
<dbReference type="PDB" id="7TTU">
    <property type="method" value="EM"/>
    <property type="resolution" value="3.00 A"/>
    <property type="chains" value="F=4-90"/>
</dbReference>
<dbReference type="PDB" id="7TTW">
    <property type="method" value="EM"/>
    <property type="resolution" value="2.90 A"/>
    <property type="chains" value="F=4-90"/>
</dbReference>
<dbReference type="PDB" id="8P2F">
    <property type="method" value="EM"/>
    <property type="resolution" value="2.44 A"/>
    <property type="chains" value="W=1-91"/>
</dbReference>
<dbReference type="PDB" id="8P2G">
    <property type="method" value="EM"/>
    <property type="resolution" value="2.02 A"/>
    <property type="chains" value="W=1-91"/>
</dbReference>
<dbReference type="PDB" id="8P2H">
    <property type="method" value="EM"/>
    <property type="resolution" value="2.49 A"/>
    <property type="chains" value="W=1-91"/>
</dbReference>
<dbReference type="PDBsum" id="4WCE"/>
<dbReference type="PDBsum" id="4WF9"/>
<dbReference type="PDBsum" id="4WFA"/>
<dbReference type="PDBsum" id="4WFB"/>
<dbReference type="PDBsum" id="5HKV"/>
<dbReference type="PDBsum" id="5HL7"/>
<dbReference type="PDBsum" id="5LI0"/>
<dbReference type="PDBsum" id="5ND8"/>
<dbReference type="PDBsum" id="5ND9"/>
<dbReference type="PDBsum" id="5NRG"/>
<dbReference type="PDBsum" id="5TCU"/>
<dbReference type="PDBsum" id="6DDD"/>
<dbReference type="PDBsum" id="6DDG"/>
<dbReference type="PDBsum" id="6HMA"/>
<dbReference type="PDBsum" id="6SJ6"/>
<dbReference type="PDBsum" id="6WQN"/>
<dbReference type="PDBsum" id="6WQQ"/>
<dbReference type="PDBsum" id="6WRS"/>
<dbReference type="PDBsum" id="6WRU"/>
<dbReference type="PDBsum" id="6YEF"/>
<dbReference type="PDBsum" id="7ASM"/>
<dbReference type="PDBsum" id="7ASN"/>
<dbReference type="PDBsum" id="7NHL"/>
<dbReference type="PDBsum" id="7NHM"/>
<dbReference type="PDBsum" id="7TTU"/>
<dbReference type="PDBsum" id="7TTW"/>
<dbReference type="PDBsum" id="8P2F"/>
<dbReference type="PDBsum" id="8P2G"/>
<dbReference type="PDBsum" id="8P2H"/>
<dbReference type="EMDB" id="EMD-10212"/>
<dbReference type="EMDB" id="EMD-10791"/>
<dbReference type="EMDB" id="EMD-12332"/>
<dbReference type="EMDB" id="EMD-12333"/>
<dbReference type="EMDB" id="EMD-17363"/>
<dbReference type="EMDB" id="EMD-17364"/>
<dbReference type="EMDB" id="EMD-17365"/>
<dbReference type="EMDB" id="EMD-3624"/>
<dbReference type="EMDB" id="EMD-3625"/>
<dbReference type="EMDB" id="EMD-4050"/>
<dbReference type="EMDB" id="EMD-8402"/>
<dbReference type="SMR" id="Q2FW08"/>
<dbReference type="IntAct" id="Q2FW08">
    <property type="interactions" value="1"/>
</dbReference>
<dbReference type="STRING" id="93061.SAOUHSC_02510"/>
<dbReference type="PaxDb" id="1280-SAXN108_2497"/>
<dbReference type="GeneID" id="3920886"/>
<dbReference type="KEGG" id="sao:SAOUHSC_02510"/>
<dbReference type="PATRIC" id="fig|93061.5.peg.2265"/>
<dbReference type="eggNOG" id="COG0089">
    <property type="taxonomic scope" value="Bacteria"/>
</dbReference>
<dbReference type="HOGENOM" id="CLU_037562_3_2_9"/>
<dbReference type="OrthoDB" id="9793353at2"/>
<dbReference type="EvolutionaryTrace" id="Q2FW08"/>
<dbReference type="PRO" id="PR:Q2FW08"/>
<dbReference type="Proteomes" id="UP000008816">
    <property type="component" value="Chromosome"/>
</dbReference>
<dbReference type="GO" id="GO:0022625">
    <property type="term" value="C:cytosolic large ribosomal subunit"/>
    <property type="evidence" value="ECO:0000318"/>
    <property type="project" value="GO_Central"/>
</dbReference>
<dbReference type="GO" id="GO:0019843">
    <property type="term" value="F:rRNA binding"/>
    <property type="evidence" value="ECO:0007669"/>
    <property type="project" value="UniProtKB-UniRule"/>
</dbReference>
<dbReference type="GO" id="GO:0003735">
    <property type="term" value="F:structural constituent of ribosome"/>
    <property type="evidence" value="ECO:0000318"/>
    <property type="project" value="GO_Central"/>
</dbReference>
<dbReference type="GO" id="GO:0006412">
    <property type="term" value="P:translation"/>
    <property type="evidence" value="ECO:0007669"/>
    <property type="project" value="UniProtKB-UniRule"/>
</dbReference>
<dbReference type="FunFam" id="3.30.70.330:FF:000001">
    <property type="entry name" value="50S ribosomal protein L23"/>
    <property type="match status" value="1"/>
</dbReference>
<dbReference type="Gene3D" id="3.30.70.330">
    <property type="match status" value="1"/>
</dbReference>
<dbReference type="HAMAP" id="MF_01369_B">
    <property type="entry name" value="Ribosomal_uL23_B"/>
    <property type="match status" value="1"/>
</dbReference>
<dbReference type="InterPro" id="IPR012677">
    <property type="entry name" value="Nucleotide-bd_a/b_plait_sf"/>
</dbReference>
<dbReference type="InterPro" id="IPR013025">
    <property type="entry name" value="Ribosomal_uL23-like"/>
</dbReference>
<dbReference type="InterPro" id="IPR012678">
    <property type="entry name" value="Ribosomal_uL23/eL15/eS24_sf"/>
</dbReference>
<dbReference type="NCBIfam" id="NF004363">
    <property type="entry name" value="PRK05738.2-4"/>
    <property type="match status" value="1"/>
</dbReference>
<dbReference type="PANTHER" id="PTHR11620">
    <property type="entry name" value="60S RIBOSOMAL PROTEIN L23A"/>
    <property type="match status" value="1"/>
</dbReference>
<dbReference type="Pfam" id="PF00276">
    <property type="entry name" value="Ribosomal_L23"/>
    <property type="match status" value="1"/>
</dbReference>
<dbReference type="SUPFAM" id="SSF54189">
    <property type="entry name" value="Ribosomal proteins S24e, L23 and L15e"/>
    <property type="match status" value="1"/>
</dbReference>
<name>RL23_STAA8</name>
<evidence type="ECO:0000255" key="1">
    <source>
        <dbReference type="HAMAP-Rule" id="MF_01369"/>
    </source>
</evidence>
<evidence type="ECO:0000305" key="2"/>
<evidence type="ECO:0007829" key="3">
    <source>
        <dbReference type="PDB" id="7ASM"/>
    </source>
</evidence>
<protein>
    <recommendedName>
        <fullName evidence="1">Large ribosomal subunit protein uL23</fullName>
    </recommendedName>
    <alternativeName>
        <fullName evidence="2">50S ribosomal protein L23</fullName>
    </alternativeName>
</protein>
<comment type="function">
    <text evidence="1">One of the early assembly proteins it binds 23S rRNA. One of the proteins that surrounds the polypeptide exit tunnel on the outside of the ribosome. Forms the main docking site for trigger factor binding to the ribosome.</text>
</comment>
<comment type="subunit">
    <text evidence="1">Part of the 50S ribosomal subunit. Contacts protein L29, and trigger factor when it is bound to the ribosome.</text>
</comment>
<comment type="similarity">
    <text evidence="1">Belongs to the universal ribosomal protein uL23 family.</text>
</comment>
<sequence length="91" mass="10605">MEARDILKRPVITEKSSEAMAEDKYTFDVDTRVNKTQVKMAVEEIFNVKVASVNIMNYKPKKKRMGRYQGYTNKRRKAIVTLKEGSIDLFN</sequence>
<keyword id="KW-0002">3D-structure</keyword>
<keyword id="KW-1185">Reference proteome</keyword>
<keyword id="KW-0687">Ribonucleoprotein</keyword>
<keyword id="KW-0689">Ribosomal protein</keyword>
<keyword id="KW-0694">RNA-binding</keyword>
<keyword id="KW-0699">rRNA-binding</keyword>
<gene>
    <name evidence="1" type="primary">rplW</name>
    <name type="ordered locus">SAOUHSC_02510</name>
</gene>
<proteinExistence type="evidence at protein level"/>
<feature type="chain" id="PRO_0000272852" description="Large ribosomal subunit protein uL23">
    <location>
        <begin position="1"/>
        <end position="91"/>
    </location>
</feature>
<feature type="helix" evidence="3">
    <location>
        <begin position="3"/>
        <end position="6"/>
    </location>
</feature>
<feature type="strand" evidence="3">
    <location>
        <begin position="7"/>
        <end position="10"/>
    </location>
</feature>
<feature type="helix" evidence="3">
    <location>
        <begin position="14"/>
        <end position="21"/>
    </location>
</feature>
<feature type="strand" evidence="3">
    <location>
        <begin position="24"/>
        <end position="29"/>
    </location>
</feature>
<feature type="helix" evidence="3">
    <location>
        <begin position="35"/>
        <end position="46"/>
    </location>
</feature>
<feature type="strand" evidence="3">
    <location>
        <begin position="49"/>
        <end position="58"/>
    </location>
</feature>
<feature type="strand" evidence="3">
    <location>
        <begin position="62"/>
        <end position="67"/>
    </location>
</feature>
<feature type="strand" evidence="3">
    <location>
        <begin position="69"/>
        <end position="71"/>
    </location>
</feature>
<feature type="strand" evidence="3">
    <location>
        <begin position="75"/>
        <end position="84"/>
    </location>
</feature>